<reference key="1">
    <citation type="journal article" date="2010" name="Appl. Environ. Microbiol.">
        <title>The genome sequence of Psychrobacter arcticus 273-4, a psychroactive Siberian permafrost bacterium, reveals mechanisms for adaptation to low-temperature growth.</title>
        <authorList>
            <person name="Ayala-del-Rio H.L."/>
            <person name="Chain P.S."/>
            <person name="Grzymski J.J."/>
            <person name="Ponder M.A."/>
            <person name="Ivanova N."/>
            <person name="Bergholz P.W."/>
            <person name="Di Bartolo G."/>
            <person name="Hauser L."/>
            <person name="Land M."/>
            <person name="Bakermans C."/>
            <person name="Rodrigues D."/>
            <person name="Klappenbach J."/>
            <person name="Zarka D."/>
            <person name="Larimer F."/>
            <person name="Richardson P."/>
            <person name="Murray A."/>
            <person name="Thomashow M."/>
            <person name="Tiedje J.M."/>
        </authorList>
    </citation>
    <scope>NUCLEOTIDE SEQUENCE [LARGE SCALE GENOMIC DNA]</scope>
    <source>
        <strain>DSM 17307 / VKM B-2377 / 273-4</strain>
    </source>
</reference>
<sequence>MAQLDPKTINKIVLAYSGGLDTSIIARWLQETYDAEVITFTADIGQGEEVEPARAKAEAMGIKHIHIEDLREEFARDYVFPMFRANAIYEGEYLLGTSIARPLIAKRLVEIAKEHNADAISHGATGKGNDQVRFELGAVALSPDVVTIAPWREWDLSSRESLMEYAKEHNISIDYAGNKKKSPYSMDANLLHISYEGGILEDPYAEAEDDMWRWSVSPEQAPDVPQYLELEYAKGDIVAIDGEALKPYEVMIKLNEIGGKHGIGRLDIVENRYVGMKSRGCYETPAGTIMLKAHRGIESLTLDREAAHLKDELMPRYAKTIYNGYWFSPERMMLQALIDKSQEYVNGTVRVKLYKGAVSVVGRKSDDSLFDEKIATFEDDAGAYDQKDAEGFIRLNGLRLAIEASRGRDLSK</sequence>
<name>ASSY_PSYA2</name>
<gene>
    <name evidence="1" type="primary">argG</name>
    <name type="ordered locus">Psyc_1631</name>
</gene>
<comment type="catalytic activity">
    <reaction evidence="1">
        <text>L-citrulline + L-aspartate + ATP = 2-(N(omega)-L-arginino)succinate + AMP + diphosphate + H(+)</text>
        <dbReference type="Rhea" id="RHEA:10932"/>
        <dbReference type="ChEBI" id="CHEBI:15378"/>
        <dbReference type="ChEBI" id="CHEBI:29991"/>
        <dbReference type="ChEBI" id="CHEBI:30616"/>
        <dbReference type="ChEBI" id="CHEBI:33019"/>
        <dbReference type="ChEBI" id="CHEBI:57472"/>
        <dbReference type="ChEBI" id="CHEBI:57743"/>
        <dbReference type="ChEBI" id="CHEBI:456215"/>
        <dbReference type="EC" id="6.3.4.5"/>
    </reaction>
</comment>
<comment type="pathway">
    <text evidence="1">Amino-acid biosynthesis; L-arginine biosynthesis; L-arginine from L-ornithine and carbamoyl phosphate: step 2/3.</text>
</comment>
<comment type="subunit">
    <text evidence="1">Homotetramer.</text>
</comment>
<comment type="subcellular location">
    <subcellularLocation>
        <location evidence="1">Cytoplasm</location>
    </subcellularLocation>
</comment>
<comment type="similarity">
    <text evidence="1">Belongs to the argininosuccinate synthase family. Type 1 subfamily.</text>
</comment>
<keyword id="KW-0028">Amino-acid biosynthesis</keyword>
<keyword id="KW-0055">Arginine biosynthesis</keyword>
<keyword id="KW-0067">ATP-binding</keyword>
<keyword id="KW-0963">Cytoplasm</keyword>
<keyword id="KW-0436">Ligase</keyword>
<keyword id="KW-0547">Nucleotide-binding</keyword>
<keyword id="KW-1185">Reference proteome</keyword>
<organism>
    <name type="scientific">Psychrobacter arcticus (strain DSM 17307 / VKM B-2377 / 273-4)</name>
    <dbReference type="NCBI Taxonomy" id="259536"/>
    <lineage>
        <taxon>Bacteria</taxon>
        <taxon>Pseudomonadati</taxon>
        <taxon>Pseudomonadota</taxon>
        <taxon>Gammaproteobacteria</taxon>
        <taxon>Moraxellales</taxon>
        <taxon>Moraxellaceae</taxon>
        <taxon>Psychrobacter</taxon>
    </lineage>
</organism>
<protein>
    <recommendedName>
        <fullName evidence="1">Argininosuccinate synthase</fullName>
        <ecNumber evidence="1">6.3.4.5</ecNumber>
    </recommendedName>
    <alternativeName>
        <fullName evidence="1">Citrulline--aspartate ligase</fullName>
    </alternativeName>
</protein>
<evidence type="ECO:0000255" key="1">
    <source>
        <dbReference type="HAMAP-Rule" id="MF_00005"/>
    </source>
</evidence>
<dbReference type="EC" id="6.3.4.5" evidence="1"/>
<dbReference type="EMBL" id="CP000082">
    <property type="protein sequence ID" value="AAZ19479.1"/>
    <property type="molecule type" value="Genomic_DNA"/>
</dbReference>
<dbReference type="RefSeq" id="WP_011280895.1">
    <property type="nucleotide sequence ID" value="NC_007204.1"/>
</dbReference>
<dbReference type="SMR" id="Q4FR79"/>
<dbReference type="STRING" id="259536.Psyc_1631"/>
<dbReference type="KEGG" id="par:Psyc_1631"/>
<dbReference type="eggNOG" id="COG0137">
    <property type="taxonomic scope" value="Bacteria"/>
</dbReference>
<dbReference type="HOGENOM" id="CLU_032784_4_2_6"/>
<dbReference type="OrthoDB" id="9801641at2"/>
<dbReference type="UniPathway" id="UPA00068">
    <property type="reaction ID" value="UER00113"/>
</dbReference>
<dbReference type="Proteomes" id="UP000000546">
    <property type="component" value="Chromosome"/>
</dbReference>
<dbReference type="GO" id="GO:0005737">
    <property type="term" value="C:cytoplasm"/>
    <property type="evidence" value="ECO:0007669"/>
    <property type="project" value="UniProtKB-SubCell"/>
</dbReference>
<dbReference type="GO" id="GO:0004055">
    <property type="term" value="F:argininosuccinate synthase activity"/>
    <property type="evidence" value="ECO:0007669"/>
    <property type="project" value="UniProtKB-UniRule"/>
</dbReference>
<dbReference type="GO" id="GO:0005524">
    <property type="term" value="F:ATP binding"/>
    <property type="evidence" value="ECO:0007669"/>
    <property type="project" value="UniProtKB-UniRule"/>
</dbReference>
<dbReference type="GO" id="GO:0000053">
    <property type="term" value="P:argininosuccinate metabolic process"/>
    <property type="evidence" value="ECO:0007669"/>
    <property type="project" value="TreeGrafter"/>
</dbReference>
<dbReference type="GO" id="GO:0006526">
    <property type="term" value="P:L-arginine biosynthetic process"/>
    <property type="evidence" value="ECO:0007669"/>
    <property type="project" value="UniProtKB-UniRule"/>
</dbReference>
<dbReference type="GO" id="GO:0000050">
    <property type="term" value="P:urea cycle"/>
    <property type="evidence" value="ECO:0007669"/>
    <property type="project" value="TreeGrafter"/>
</dbReference>
<dbReference type="CDD" id="cd01999">
    <property type="entry name" value="ASS"/>
    <property type="match status" value="1"/>
</dbReference>
<dbReference type="FunFam" id="3.40.50.620:FF:000019">
    <property type="entry name" value="Argininosuccinate synthase"/>
    <property type="match status" value="1"/>
</dbReference>
<dbReference type="FunFam" id="3.90.1260.10:FF:000007">
    <property type="entry name" value="Argininosuccinate synthase"/>
    <property type="match status" value="1"/>
</dbReference>
<dbReference type="Gene3D" id="3.90.1260.10">
    <property type="entry name" value="Argininosuccinate synthetase, chain A, domain 2"/>
    <property type="match status" value="1"/>
</dbReference>
<dbReference type="Gene3D" id="3.40.50.620">
    <property type="entry name" value="HUPs"/>
    <property type="match status" value="1"/>
</dbReference>
<dbReference type="Gene3D" id="1.20.5.470">
    <property type="entry name" value="Single helix bin"/>
    <property type="match status" value="1"/>
</dbReference>
<dbReference type="HAMAP" id="MF_00005">
    <property type="entry name" value="Arg_succ_synth_type1"/>
    <property type="match status" value="1"/>
</dbReference>
<dbReference type="InterPro" id="IPR048268">
    <property type="entry name" value="Arginosuc_syn_C"/>
</dbReference>
<dbReference type="InterPro" id="IPR048267">
    <property type="entry name" value="Arginosuc_syn_N"/>
</dbReference>
<dbReference type="InterPro" id="IPR001518">
    <property type="entry name" value="Arginosuc_synth"/>
</dbReference>
<dbReference type="InterPro" id="IPR018223">
    <property type="entry name" value="Arginosuc_synth_CS"/>
</dbReference>
<dbReference type="InterPro" id="IPR023434">
    <property type="entry name" value="Arginosuc_synth_type_1_subfam"/>
</dbReference>
<dbReference type="InterPro" id="IPR024074">
    <property type="entry name" value="AS_cat/multimer_dom_body"/>
</dbReference>
<dbReference type="InterPro" id="IPR014729">
    <property type="entry name" value="Rossmann-like_a/b/a_fold"/>
</dbReference>
<dbReference type="NCBIfam" id="TIGR00032">
    <property type="entry name" value="argG"/>
    <property type="match status" value="1"/>
</dbReference>
<dbReference type="NCBIfam" id="NF001770">
    <property type="entry name" value="PRK00509.1"/>
    <property type="match status" value="1"/>
</dbReference>
<dbReference type="PANTHER" id="PTHR11587">
    <property type="entry name" value="ARGININOSUCCINATE SYNTHASE"/>
    <property type="match status" value="1"/>
</dbReference>
<dbReference type="PANTHER" id="PTHR11587:SF2">
    <property type="entry name" value="ARGININOSUCCINATE SYNTHASE"/>
    <property type="match status" value="1"/>
</dbReference>
<dbReference type="Pfam" id="PF20979">
    <property type="entry name" value="Arginosuc_syn_C"/>
    <property type="match status" value="1"/>
</dbReference>
<dbReference type="Pfam" id="PF00764">
    <property type="entry name" value="Arginosuc_synth"/>
    <property type="match status" value="1"/>
</dbReference>
<dbReference type="SUPFAM" id="SSF52402">
    <property type="entry name" value="Adenine nucleotide alpha hydrolases-like"/>
    <property type="match status" value="1"/>
</dbReference>
<dbReference type="SUPFAM" id="SSF69864">
    <property type="entry name" value="Argininosuccinate synthetase, C-terminal domain"/>
    <property type="match status" value="1"/>
</dbReference>
<dbReference type="PROSITE" id="PS00564">
    <property type="entry name" value="ARGININOSUCCIN_SYN_1"/>
    <property type="match status" value="1"/>
</dbReference>
<dbReference type="PROSITE" id="PS00565">
    <property type="entry name" value="ARGININOSUCCIN_SYN_2"/>
    <property type="match status" value="1"/>
</dbReference>
<accession>Q4FR79</accession>
<feature type="chain" id="PRO_0000263958" description="Argininosuccinate synthase">
    <location>
        <begin position="1"/>
        <end position="412"/>
    </location>
</feature>
<feature type="binding site" evidence="1">
    <location>
        <begin position="15"/>
        <end position="23"/>
    </location>
    <ligand>
        <name>ATP</name>
        <dbReference type="ChEBI" id="CHEBI:30616"/>
    </ligand>
</feature>
<feature type="binding site" evidence="1">
    <location>
        <position position="42"/>
    </location>
    <ligand>
        <name>ATP</name>
        <dbReference type="ChEBI" id="CHEBI:30616"/>
    </ligand>
</feature>
<feature type="binding site" evidence="1">
    <location>
        <position position="93"/>
    </location>
    <ligand>
        <name>L-citrulline</name>
        <dbReference type="ChEBI" id="CHEBI:57743"/>
    </ligand>
</feature>
<feature type="binding site" evidence="1">
    <location>
        <position position="98"/>
    </location>
    <ligand>
        <name>L-citrulline</name>
        <dbReference type="ChEBI" id="CHEBI:57743"/>
    </ligand>
</feature>
<feature type="binding site" evidence="1">
    <location>
        <position position="123"/>
    </location>
    <ligand>
        <name>ATP</name>
        <dbReference type="ChEBI" id="CHEBI:30616"/>
    </ligand>
</feature>
<feature type="binding site" evidence="1">
    <location>
        <position position="125"/>
    </location>
    <ligand>
        <name>L-aspartate</name>
        <dbReference type="ChEBI" id="CHEBI:29991"/>
    </ligand>
</feature>
<feature type="binding site" evidence="1">
    <location>
        <position position="129"/>
    </location>
    <ligand>
        <name>L-aspartate</name>
        <dbReference type="ChEBI" id="CHEBI:29991"/>
    </ligand>
</feature>
<feature type="binding site" evidence="1">
    <location>
        <position position="129"/>
    </location>
    <ligand>
        <name>L-citrulline</name>
        <dbReference type="ChEBI" id="CHEBI:57743"/>
    </ligand>
</feature>
<feature type="binding site" evidence="1">
    <location>
        <position position="130"/>
    </location>
    <ligand>
        <name>L-aspartate</name>
        <dbReference type="ChEBI" id="CHEBI:29991"/>
    </ligand>
</feature>
<feature type="binding site" evidence="1">
    <location>
        <position position="133"/>
    </location>
    <ligand>
        <name>L-citrulline</name>
        <dbReference type="ChEBI" id="CHEBI:57743"/>
    </ligand>
</feature>
<feature type="binding site" evidence="1">
    <location>
        <position position="185"/>
    </location>
    <ligand>
        <name>L-citrulline</name>
        <dbReference type="ChEBI" id="CHEBI:57743"/>
    </ligand>
</feature>
<feature type="binding site" evidence="1">
    <location>
        <position position="194"/>
    </location>
    <ligand>
        <name>L-citrulline</name>
        <dbReference type="ChEBI" id="CHEBI:57743"/>
    </ligand>
</feature>
<feature type="binding site" evidence="1">
    <location>
        <position position="270"/>
    </location>
    <ligand>
        <name>L-citrulline</name>
        <dbReference type="ChEBI" id="CHEBI:57743"/>
    </ligand>
</feature>
<feature type="binding site" evidence="1">
    <location>
        <position position="282"/>
    </location>
    <ligand>
        <name>L-citrulline</name>
        <dbReference type="ChEBI" id="CHEBI:57743"/>
    </ligand>
</feature>
<proteinExistence type="inferred from homology"/>